<organism>
    <name type="scientific">Mus musculus</name>
    <name type="common">Mouse</name>
    <dbReference type="NCBI Taxonomy" id="10090"/>
    <lineage>
        <taxon>Eukaryota</taxon>
        <taxon>Metazoa</taxon>
        <taxon>Chordata</taxon>
        <taxon>Craniata</taxon>
        <taxon>Vertebrata</taxon>
        <taxon>Euteleostomi</taxon>
        <taxon>Mammalia</taxon>
        <taxon>Eutheria</taxon>
        <taxon>Euarchontoglires</taxon>
        <taxon>Glires</taxon>
        <taxon>Rodentia</taxon>
        <taxon>Myomorpha</taxon>
        <taxon>Muroidea</taxon>
        <taxon>Muridae</taxon>
        <taxon>Murinae</taxon>
        <taxon>Mus</taxon>
        <taxon>Mus</taxon>
    </lineage>
</organism>
<reference key="1">
    <citation type="journal article" date="2004" name="Genome Res.">
        <title>The status, quality, and expansion of the NIH full-length cDNA project: the Mammalian Gene Collection (MGC).</title>
        <authorList>
            <consortium name="The MGC Project Team"/>
        </authorList>
    </citation>
    <scope>NUCLEOTIDE SEQUENCE [LARGE SCALE MRNA]</scope>
    <source>
        <tissue>Eye</tissue>
        <tissue>Retina</tissue>
    </source>
</reference>
<reference key="2">
    <citation type="journal article" date="2007" name="EMBO J.">
        <title>Reconstitution reveals the functional core of mammalian eIF3.</title>
        <authorList>
            <person name="Masutani M."/>
            <person name="Sonenberg N."/>
            <person name="Yokoyama S."/>
            <person name="Imataka H."/>
        </authorList>
    </citation>
    <scope>CHARACTERIZATION OF THE EIF-3 COMPLEX</scope>
    <scope>FUNCTION</scope>
    <scope>IDENTIFICATION IN THE EIF-3 COMPLEX</scope>
    <scope>IDENTIFICATION BY MASS SPECTROMETRY</scope>
</reference>
<reference key="3">
    <citation type="journal article" date="2010" name="Cell">
        <title>A tissue-specific atlas of mouse protein phosphorylation and expression.</title>
        <authorList>
            <person name="Huttlin E.L."/>
            <person name="Jedrychowski M.P."/>
            <person name="Elias J.E."/>
            <person name="Goswami T."/>
            <person name="Rad R."/>
            <person name="Beausoleil S.A."/>
            <person name="Villen J."/>
            <person name="Haas W."/>
            <person name="Sowa M.E."/>
            <person name="Gygi S.P."/>
        </authorList>
    </citation>
    <scope>PHOSPHORYLATION [LARGE SCALE ANALYSIS] AT SER-191</scope>
    <scope>IDENTIFICATION BY MASS SPECTROMETRY [LARGE SCALE ANALYSIS]</scope>
    <source>
        <tissue>Brain</tissue>
        <tissue>Brown adipose tissue</tissue>
        <tissue>Heart</tissue>
        <tissue>Kidney</tissue>
        <tissue>Liver</tissue>
        <tissue>Lung</tissue>
        <tissue>Pancreas</tissue>
        <tissue>Spleen</tissue>
        <tissue>Testis</tissue>
    </source>
</reference>
<reference key="4">
    <citation type="journal article" date="2015" name="Mol. Cell. Biol.">
        <title>The DHX33 RNA Helicase Promotes mRNA Translation Initiation.</title>
        <authorList>
            <person name="Zhang Y."/>
            <person name="You J."/>
            <person name="Wang X."/>
            <person name="Weber J."/>
        </authorList>
    </citation>
    <scope>INTERACTION WITH DHX33</scope>
</reference>
<accession>Q91WK2</accession>
<gene>
    <name type="primary">Eif3h</name>
    <name type="synonym">Eif3s3</name>
</gene>
<feature type="chain" id="PRO_0000213962" description="Eukaryotic translation initiation factor 3 subunit H">
    <location>
        <begin position="1"/>
        <end position="352"/>
    </location>
</feature>
<feature type="domain" description="MPN" evidence="3">
    <location>
        <begin position="39"/>
        <end position="173"/>
    </location>
</feature>
<feature type="region of interest" description="Disordered" evidence="4">
    <location>
        <begin position="1"/>
        <end position="34"/>
    </location>
</feature>
<feature type="region of interest" description="Disordered" evidence="4">
    <location>
        <begin position="268"/>
        <end position="301"/>
    </location>
</feature>
<feature type="compositionally biased region" description="Gly residues" evidence="4">
    <location>
        <begin position="17"/>
        <end position="32"/>
    </location>
</feature>
<feature type="compositionally biased region" description="Low complexity" evidence="4">
    <location>
        <begin position="270"/>
        <end position="289"/>
    </location>
</feature>
<feature type="modified residue" description="Phosphoserine" evidence="1">
    <location>
        <position position="3"/>
    </location>
</feature>
<feature type="modified residue" description="Phosphoserine" evidence="1 2">
    <location>
        <position position="183"/>
    </location>
</feature>
<feature type="modified residue" description="Phosphoserine" evidence="7">
    <location>
        <position position="191"/>
    </location>
</feature>
<feature type="cross-link" description="Glycyl lysine isopeptide (Lys-Gly) (interchain with G-Cter in SUMO2)" evidence="1">
    <location>
        <position position="303"/>
    </location>
</feature>
<protein>
    <recommendedName>
        <fullName evidence="2">Eukaryotic translation initiation factor 3 subunit H</fullName>
        <shortName evidence="2">eIF3h</shortName>
    </recommendedName>
    <alternativeName>
        <fullName evidence="2">Eukaryotic translation initiation factor 3 subunit 3</fullName>
    </alternativeName>
    <alternativeName>
        <fullName>eIF-3-gamma</fullName>
    </alternativeName>
    <alternativeName>
        <fullName evidence="2">eIF3 p40 subunit</fullName>
    </alternativeName>
</protein>
<proteinExistence type="evidence at protein level"/>
<evidence type="ECO:0000250" key="1">
    <source>
        <dbReference type="UniProtKB" id="O15372"/>
    </source>
</evidence>
<evidence type="ECO:0000255" key="2">
    <source>
        <dbReference type="HAMAP-Rule" id="MF_03007"/>
    </source>
</evidence>
<evidence type="ECO:0000255" key="3">
    <source>
        <dbReference type="PROSITE-ProRule" id="PRU01182"/>
    </source>
</evidence>
<evidence type="ECO:0000256" key="4">
    <source>
        <dbReference type="SAM" id="MobiDB-lite"/>
    </source>
</evidence>
<evidence type="ECO:0000269" key="5">
    <source>
    </source>
</evidence>
<evidence type="ECO:0000269" key="6">
    <source>
    </source>
</evidence>
<evidence type="ECO:0007744" key="7">
    <source>
    </source>
</evidence>
<comment type="function">
    <text evidence="2 5">Component of the eukaryotic translation initiation factor 3 (eIF-3) complex, which is required for several steps in the initiation of protein synthesis. The eIF-3 complex associates with the 40S ribosome and facilitates the recruitment of eIF-1, eIF-1A, eIF-2:GTP:methionyl-tRNAi and eIF-5 to form the 43S pre-initiation complex (43S PIC). The eIF-3 complex stimulates mRNA recruitment to the 43S PIC and scanning of the mRNA for AUG recognition. The eIF-3 complex is also required for disassembly and recycling of post-termination ribosomal complexes and subsequently prevents premature joining of the 40S and 60S ribosomal subunits prior to initiation. The eIF-3 complex specifically targets and initiates translation of a subset of mRNAs involved in cell proliferation, including cell cycling, differentiation and apoptosis, and uses different modes of RNA stem-loop binding to exert either translational activation or repression.</text>
</comment>
<comment type="subunit">
    <text evidence="2 5 6">Component of the eukaryotic translation initiation factor 3 (eIF-3) complex, which is composed of 13 subunits: EIF3A, EIF3B, EIF3C, EIF3D, EIF3E, EIF3F, EIF3G, EIF3H, EIF3I, EIF3J, EIF3K, EIF3L and EIF3M. The eIF-3 complex appears to include 3 stable modules: module A is composed of EIF3A, EIF3B, EIF3G and EIF3I; module B is composed of EIF3F, EIF3H, and EIF3M; and module C is composed of EIF3C, EIF3D, EIF3E, EIF3K and EIF3L. EIF3C of module C binds EIF3B of module A and EIF3H of module B, thereby linking the three modules. EIF3J is a labile subunit that binds to the eIF-3 complex via EIF3B. The eIF-3 complex may interact with RPS6KB1 under conditions of nutrient depletion. Mitogenic stimulation may lead to binding and activation of a complex composed of MTOR and RPTOR, leading to phosphorylation and release of RPS6KB1 and binding of EIF4B to eIF-3. Interacts with RNF139; the interaction leads to protein translation inhibitions in a ubiquitination-dependent manner (By similarity). Interacts with DHX33; the interaction is independent of RNA (PubMed:26100019).</text>
</comment>
<comment type="subcellular location">
    <subcellularLocation>
        <location evidence="2">Cytoplasm</location>
    </subcellularLocation>
</comment>
<comment type="similarity">
    <text evidence="2">Belongs to the eIF-3 subunit H family.</text>
</comment>
<dbReference type="EMBL" id="BC014755">
    <property type="protein sequence ID" value="AAH14755.1"/>
    <property type="molecule type" value="mRNA"/>
</dbReference>
<dbReference type="CCDS" id="CCDS27461.1"/>
<dbReference type="RefSeq" id="NP_542366.1">
    <property type="nucleotide sequence ID" value="NM_080635.2"/>
</dbReference>
<dbReference type="SMR" id="Q91WK2"/>
<dbReference type="BioGRID" id="212675">
    <property type="interactions" value="37"/>
</dbReference>
<dbReference type="FunCoup" id="Q91WK2">
    <property type="interactions" value="3292"/>
</dbReference>
<dbReference type="IntAct" id="Q91WK2">
    <property type="interactions" value="5"/>
</dbReference>
<dbReference type="MINT" id="Q91WK2"/>
<dbReference type="STRING" id="10090.ENSMUSP00000022925"/>
<dbReference type="MEROPS" id="M67.971"/>
<dbReference type="GlyGen" id="Q91WK2">
    <property type="glycosylation" value="1 site, 1 O-linked glycan (1 site)"/>
</dbReference>
<dbReference type="iPTMnet" id="Q91WK2"/>
<dbReference type="PhosphoSitePlus" id="Q91WK2"/>
<dbReference type="SwissPalm" id="Q91WK2"/>
<dbReference type="jPOST" id="Q91WK2"/>
<dbReference type="PaxDb" id="10090-ENSMUSP00000022925"/>
<dbReference type="ProteomicsDB" id="277846"/>
<dbReference type="Pumba" id="Q91WK2"/>
<dbReference type="Antibodypedia" id="13577">
    <property type="antibodies" value="299 antibodies from 32 providers"/>
</dbReference>
<dbReference type="DNASU" id="68135"/>
<dbReference type="Ensembl" id="ENSMUST00000022925.10">
    <property type="protein sequence ID" value="ENSMUSP00000022925.9"/>
    <property type="gene ID" value="ENSMUSG00000022312.12"/>
</dbReference>
<dbReference type="GeneID" id="68135"/>
<dbReference type="KEGG" id="mmu:68135"/>
<dbReference type="UCSC" id="uc007vrb.1">
    <property type="organism name" value="mouse"/>
</dbReference>
<dbReference type="AGR" id="MGI:1915385"/>
<dbReference type="CTD" id="8667"/>
<dbReference type="MGI" id="MGI:1915385">
    <property type="gene designation" value="Eif3h"/>
</dbReference>
<dbReference type="VEuPathDB" id="HostDB:ENSMUSG00000022312"/>
<dbReference type="eggNOG" id="KOG1560">
    <property type="taxonomic scope" value="Eukaryota"/>
</dbReference>
<dbReference type="GeneTree" id="ENSGT00730000111042"/>
<dbReference type="HOGENOM" id="CLU_044094_0_0_1"/>
<dbReference type="InParanoid" id="Q91WK2"/>
<dbReference type="OMA" id="WYQSTYF"/>
<dbReference type="OrthoDB" id="10265695at2759"/>
<dbReference type="PhylomeDB" id="Q91WK2"/>
<dbReference type="TreeFam" id="TF101504"/>
<dbReference type="Reactome" id="R-MMU-156827">
    <property type="pathway name" value="L13a-mediated translational silencing of Ceruloplasmin expression"/>
</dbReference>
<dbReference type="Reactome" id="R-MMU-72649">
    <property type="pathway name" value="Translation initiation complex formation"/>
</dbReference>
<dbReference type="Reactome" id="R-MMU-72689">
    <property type="pathway name" value="Formation of a pool of free 40S subunits"/>
</dbReference>
<dbReference type="Reactome" id="R-MMU-72695">
    <property type="pathway name" value="Formation of the ternary complex, and subsequently, the 43S complex"/>
</dbReference>
<dbReference type="Reactome" id="R-MMU-72702">
    <property type="pathway name" value="Ribosomal scanning and start codon recognition"/>
</dbReference>
<dbReference type="Reactome" id="R-MMU-72706">
    <property type="pathway name" value="GTP hydrolysis and joining of the 60S ribosomal subunit"/>
</dbReference>
<dbReference type="BioGRID-ORCS" id="68135">
    <property type="hits" value="26 hits in 79 CRISPR screens"/>
</dbReference>
<dbReference type="ChiTaRS" id="Eif3h">
    <property type="organism name" value="mouse"/>
</dbReference>
<dbReference type="PRO" id="PR:Q91WK2"/>
<dbReference type="Proteomes" id="UP000000589">
    <property type="component" value="Chromosome 15"/>
</dbReference>
<dbReference type="RNAct" id="Q91WK2">
    <property type="molecule type" value="protein"/>
</dbReference>
<dbReference type="Bgee" id="ENSMUSG00000022312">
    <property type="expression patterns" value="Expressed in embryonic brain and 96 other cell types or tissues"/>
</dbReference>
<dbReference type="ExpressionAtlas" id="Q91WK2">
    <property type="expression patterns" value="baseline and differential"/>
</dbReference>
<dbReference type="GO" id="GO:0016282">
    <property type="term" value="C:eukaryotic 43S preinitiation complex"/>
    <property type="evidence" value="ECO:0007669"/>
    <property type="project" value="UniProtKB-UniRule"/>
</dbReference>
<dbReference type="GO" id="GO:0033290">
    <property type="term" value="C:eukaryotic 48S preinitiation complex"/>
    <property type="evidence" value="ECO:0007669"/>
    <property type="project" value="UniProtKB-UniRule"/>
</dbReference>
<dbReference type="GO" id="GO:0005852">
    <property type="term" value="C:eukaryotic translation initiation factor 3 complex"/>
    <property type="evidence" value="ECO:0000314"/>
    <property type="project" value="UniProtKB"/>
</dbReference>
<dbReference type="GO" id="GO:0071541">
    <property type="term" value="C:eukaryotic translation initiation factor 3 complex, eIF3m"/>
    <property type="evidence" value="ECO:0000314"/>
    <property type="project" value="MGI"/>
</dbReference>
<dbReference type="GO" id="GO:0140492">
    <property type="term" value="F:metal-dependent deubiquitinase activity"/>
    <property type="evidence" value="ECO:0007669"/>
    <property type="project" value="Ensembl"/>
</dbReference>
<dbReference type="GO" id="GO:0003743">
    <property type="term" value="F:translation initiation factor activity"/>
    <property type="evidence" value="ECO:0007669"/>
    <property type="project" value="UniProtKB-UniRule"/>
</dbReference>
<dbReference type="GO" id="GO:0001732">
    <property type="term" value="P:formation of cytoplasmic translation initiation complex"/>
    <property type="evidence" value="ECO:0007669"/>
    <property type="project" value="UniProtKB-UniRule"/>
</dbReference>
<dbReference type="GO" id="GO:0032435">
    <property type="term" value="P:negative regulation of proteasomal ubiquitin-dependent protein catabolic process"/>
    <property type="evidence" value="ECO:0007669"/>
    <property type="project" value="Ensembl"/>
</dbReference>
<dbReference type="GO" id="GO:0006413">
    <property type="term" value="P:translational initiation"/>
    <property type="evidence" value="ECO:0000314"/>
    <property type="project" value="UniProtKB"/>
</dbReference>
<dbReference type="CDD" id="cd08065">
    <property type="entry name" value="MPN_eIF3h"/>
    <property type="match status" value="1"/>
</dbReference>
<dbReference type="FunFam" id="3.40.140.10:FF:000020">
    <property type="entry name" value="Eukaryotic translation initiation factor 3 subunit H"/>
    <property type="match status" value="1"/>
</dbReference>
<dbReference type="Gene3D" id="3.40.140.10">
    <property type="entry name" value="Cytidine Deaminase, domain 2"/>
    <property type="match status" value="1"/>
</dbReference>
<dbReference type="HAMAP" id="MF_03007">
    <property type="entry name" value="eIF3h"/>
    <property type="match status" value="1"/>
</dbReference>
<dbReference type="InterPro" id="IPR027524">
    <property type="entry name" value="eIF3h"/>
</dbReference>
<dbReference type="InterPro" id="IPR045810">
    <property type="entry name" value="eIF3h_C"/>
</dbReference>
<dbReference type="InterPro" id="IPR000555">
    <property type="entry name" value="JAMM/MPN+_dom"/>
</dbReference>
<dbReference type="InterPro" id="IPR050242">
    <property type="entry name" value="JAMM_MPN+_peptidase_M67A"/>
</dbReference>
<dbReference type="InterPro" id="IPR037518">
    <property type="entry name" value="MPN"/>
</dbReference>
<dbReference type="PANTHER" id="PTHR10410">
    <property type="entry name" value="EUKARYOTIC TRANSLATION INITIATION FACTOR 3 -RELATED"/>
    <property type="match status" value="1"/>
</dbReference>
<dbReference type="Pfam" id="PF19445">
    <property type="entry name" value="eIF3h_C"/>
    <property type="match status" value="1"/>
</dbReference>
<dbReference type="Pfam" id="PF01398">
    <property type="entry name" value="JAB"/>
    <property type="match status" value="1"/>
</dbReference>
<dbReference type="SMART" id="SM00232">
    <property type="entry name" value="JAB_MPN"/>
    <property type="match status" value="1"/>
</dbReference>
<dbReference type="PROSITE" id="PS50249">
    <property type="entry name" value="MPN"/>
    <property type="match status" value="1"/>
</dbReference>
<sequence length="352" mass="39832">MASRKEGTGSTATSSGSAGGAVGKGKGKGGSGDSAVKQVQIDGLVVLKIIKHYQEEGQGTEVVQGVLLGLVVEDRLEITNCFPFPQHTEDDADFDEVQYQMEMMRSLRHVNIDHLHVGWYQSTYYGSFVTRALLDSQFSYQHAIEESVVLIYDPIKTAQGSLSLKAYRLTPKLMEVCKEKDFSPEALKKASITFEHMFEEVPIVIKNSHLINVLMWELEKKSAVADKHELLSLASSNHLGKSLQLLMDRVDEMSQDIIKYNTYMRNTSKQQQQKHQYQQRRQQENMQRQSRGEPPLPEEDLSKLFKPHQAPARMDSLLIAGQINTYCQNIKEFTAQNLGKLFMAQALQEYNN</sequence>
<name>EIF3H_MOUSE</name>
<keyword id="KW-0963">Cytoplasm</keyword>
<keyword id="KW-0396">Initiation factor</keyword>
<keyword id="KW-1017">Isopeptide bond</keyword>
<keyword id="KW-0597">Phosphoprotein</keyword>
<keyword id="KW-0648">Protein biosynthesis</keyword>
<keyword id="KW-1185">Reference proteome</keyword>
<keyword id="KW-0832">Ubl conjugation</keyword>